<accession>P38347</accession>
<accession>D6VQR7</accession>
<sequence>MFDPLDLYTPDDIQVEALQFNLAEREPKDPCSPQRDEILTAVDEEESDDDDTIIDNLDLPSVKYAPPEVILCILILLKPDRQVNFNQETGKNKSVLEVCKSHGLEPDLLKRLLTWYTEEWPNKRLNSLEKICNKIPMLRFTVSKELLLGYYTSVLKKYNNSCGLNEEIIQELLKELSSRISENCGRTAQPSIVRYFELRNLSTSIPLHEPSLTADNLGWKTWGSSLILSQLVVDHLDYLHTTNVNMLANSDIKQIKVLELGAGTGLVGLSWALKWKELYGTENIEIFVTDLPEIVTNLKKNVSLNNLGDFVQAEILDWTNPHDFIDKFGHENEFDVILIADPIYSPQHPEWVVNMISKFLAASGTCHLEIPLRAKYAKEREVLKLLLKESDLKVVEERHSEGVDDWGAVKYLYRQIVRN</sequence>
<comment type="function">
    <text evidence="4 5 6 7">S-adenosyl-L-methionine-dependent protein-lysine N-methyltransferase that mono- and dimethylates elongation factor 2 (EFT1/EFT2) at 'Lys-613' and methylates elongation factor 3A (YEF3).</text>
</comment>
<comment type="subcellular location">
    <subcellularLocation>
        <location evidence="2">Cytoplasm</location>
    </subcellularLocation>
</comment>
<comment type="disruption phenotype">
    <text evidence="8">Increases sensitivity to antibiotics that target translation and decreases translational fidelity.</text>
</comment>
<comment type="miscellaneous">
    <text evidence="3">Present with 217 molecules/cell in log phase SD medium.</text>
</comment>
<comment type="similarity">
    <text evidence="10">Belongs to the class I-like SAM-binding methyltransferase superfamily. METTL21 family.</text>
</comment>
<feature type="chain" id="PRO_0000202531" description="Protein-lysine N-methyltransferase EFM2">
    <location>
        <begin position="1"/>
        <end position="419"/>
    </location>
</feature>
<feature type="binding site" evidence="1">
    <location>
        <position position="222"/>
    </location>
    <ligand>
        <name>S-adenosyl-L-methionine</name>
        <dbReference type="ChEBI" id="CHEBI:59789"/>
    </ligand>
</feature>
<feature type="binding site" evidence="1">
    <location>
        <begin position="261"/>
        <end position="263"/>
    </location>
    <ligand>
        <name>S-adenosyl-L-methionine</name>
        <dbReference type="ChEBI" id="CHEBI:59789"/>
    </ligand>
</feature>
<feature type="binding site" evidence="1">
    <location>
        <position position="290"/>
    </location>
    <ligand>
        <name>S-adenosyl-L-methionine</name>
        <dbReference type="ChEBI" id="CHEBI:59789"/>
    </ligand>
</feature>
<feature type="binding site" evidence="1">
    <location>
        <position position="318"/>
    </location>
    <ligand>
        <name>S-adenosyl-L-methionine</name>
        <dbReference type="ChEBI" id="CHEBI:59789"/>
    </ligand>
</feature>
<feature type="binding site" evidence="1">
    <location>
        <position position="340"/>
    </location>
    <ligand>
        <name>S-adenosyl-L-methionine</name>
        <dbReference type="ChEBI" id="CHEBI:59789"/>
    </ligand>
</feature>
<protein>
    <recommendedName>
        <fullName evidence="11">Protein-lysine N-methyltransferase EFM2</fullName>
        <ecNumber evidence="4 5 6 7">2.1.1.-</ecNumber>
    </recommendedName>
    <alternativeName>
        <fullName evidence="9">Elongation factor methyltransferase 2</fullName>
    </alternativeName>
</protein>
<name>EFM2_YEAST</name>
<keyword id="KW-0963">Cytoplasm</keyword>
<keyword id="KW-0489">Methyltransferase</keyword>
<keyword id="KW-1185">Reference proteome</keyword>
<keyword id="KW-0949">S-adenosyl-L-methionine</keyword>
<keyword id="KW-0808">Transferase</keyword>
<organism>
    <name type="scientific">Saccharomyces cerevisiae (strain ATCC 204508 / S288c)</name>
    <name type="common">Baker's yeast</name>
    <dbReference type="NCBI Taxonomy" id="559292"/>
    <lineage>
        <taxon>Eukaryota</taxon>
        <taxon>Fungi</taxon>
        <taxon>Dikarya</taxon>
        <taxon>Ascomycota</taxon>
        <taxon>Saccharomycotina</taxon>
        <taxon>Saccharomycetes</taxon>
        <taxon>Saccharomycetales</taxon>
        <taxon>Saccharomycetaceae</taxon>
        <taxon>Saccharomyces</taxon>
    </lineage>
</organism>
<evidence type="ECO:0000250" key="1">
    <source>
        <dbReference type="UniProtKB" id="Q9H867"/>
    </source>
</evidence>
<evidence type="ECO:0000269" key="2">
    <source>
    </source>
</evidence>
<evidence type="ECO:0000269" key="3">
    <source>
    </source>
</evidence>
<evidence type="ECO:0000269" key="4">
    <source>
    </source>
</evidence>
<evidence type="ECO:0000269" key="5">
    <source>
    </source>
</evidence>
<evidence type="ECO:0000269" key="6">
    <source>
    </source>
</evidence>
<evidence type="ECO:0000269" key="7">
    <source>
    </source>
</evidence>
<evidence type="ECO:0000269" key="8">
    <source>
    </source>
</evidence>
<evidence type="ECO:0000303" key="9">
    <source>
    </source>
</evidence>
<evidence type="ECO:0000305" key="10"/>
<evidence type="ECO:0000305" key="11">
    <source>
    </source>
</evidence>
<evidence type="ECO:0000312" key="12">
    <source>
        <dbReference type="SGD" id="S000000475"/>
    </source>
</evidence>
<proteinExistence type="evidence at protein level"/>
<gene>
    <name evidence="9" type="primary">EFM2</name>
    <name evidence="12" type="ordered locus">YBR271W</name>
    <name type="ORF">YBR1739</name>
</gene>
<dbReference type="EC" id="2.1.1.-" evidence="4 5 6 7"/>
<dbReference type="EMBL" id="Z36140">
    <property type="protein sequence ID" value="CAA85234.1"/>
    <property type="molecule type" value="Genomic_DNA"/>
</dbReference>
<dbReference type="EMBL" id="AY692663">
    <property type="protein sequence ID" value="AAT92682.1"/>
    <property type="molecule type" value="Genomic_DNA"/>
</dbReference>
<dbReference type="EMBL" id="BK006936">
    <property type="protein sequence ID" value="DAA07387.1"/>
    <property type="molecule type" value="Genomic_DNA"/>
</dbReference>
<dbReference type="PIR" id="S46152">
    <property type="entry name" value="S46152"/>
</dbReference>
<dbReference type="RefSeq" id="NP_009830.3">
    <property type="nucleotide sequence ID" value="NM_001178619.3"/>
</dbReference>
<dbReference type="SMR" id="P38347"/>
<dbReference type="BioGRID" id="32966">
    <property type="interactions" value="30"/>
</dbReference>
<dbReference type="DIP" id="DIP-5051N"/>
<dbReference type="FunCoup" id="P38347">
    <property type="interactions" value="162"/>
</dbReference>
<dbReference type="IntAct" id="P38347">
    <property type="interactions" value="1"/>
</dbReference>
<dbReference type="STRING" id="4932.YBR271W"/>
<dbReference type="iPTMnet" id="P38347"/>
<dbReference type="PaxDb" id="4932-YBR271W"/>
<dbReference type="PeptideAtlas" id="P38347"/>
<dbReference type="EnsemblFungi" id="YBR271W_mRNA">
    <property type="protein sequence ID" value="YBR271W"/>
    <property type="gene ID" value="YBR271W"/>
</dbReference>
<dbReference type="GeneID" id="852574"/>
<dbReference type="KEGG" id="sce:YBR271W"/>
<dbReference type="AGR" id="SGD:S000000475"/>
<dbReference type="SGD" id="S000000475">
    <property type="gene designation" value="EFM2"/>
</dbReference>
<dbReference type="VEuPathDB" id="FungiDB:YBR271W"/>
<dbReference type="eggNOG" id="KOG2793">
    <property type="taxonomic scope" value="Eukaryota"/>
</dbReference>
<dbReference type="GeneTree" id="ENSGT00510000048008"/>
<dbReference type="HOGENOM" id="CLU_049351_1_0_1"/>
<dbReference type="InParanoid" id="P38347"/>
<dbReference type="OMA" id="DDFGEMK"/>
<dbReference type="OrthoDB" id="433955at2759"/>
<dbReference type="BioCyc" id="YEAST:G3O-29192-MONOMER"/>
<dbReference type="BioGRID-ORCS" id="852574">
    <property type="hits" value="0 hits in 10 CRISPR screens"/>
</dbReference>
<dbReference type="PRO" id="PR:P38347"/>
<dbReference type="Proteomes" id="UP000002311">
    <property type="component" value="Chromosome II"/>
</dbReference>
<dbReference type="RNAct" id="P38347">
    <property type="molecule type" value="protein"/>
</dbReference>
<dbReference type="GO" id="GO:0005737">
    <property type="term" value="C:cytoplasm"/>
    <property type="evidence" value="ECO:0007005"/>
    <property type="project" value="SGD"/>
</dbReference>
<dbReference type="GO" id="GO:0008276">
    <property type="term" value="F:protein methyltransferase activity"/>
    <property type="evidence" value="ECO:0000318"/>
    <property type="project" value="GO_Central"/>
</dbReference>
<dbReference type="GO" id="GO:0016279">
    <property type="term" value="F:protein-lysine N-methyltransferase activity"/>
    <property type="evidence" value="ECO:0000314"/>
    <property type="project" value="SGD"/>
</dbReference>
<dbReference type="GO" id="GO:0008757">
    <property type="term" value="F:S-adenosylmethionine-dependent methyltransferase activity"/>
    <property type="evidence" value="ECO:0000314"/>
    <property type="project" value="SGD"/>
</dbReference>
<dbReference type="GO" id="GO:0032259">
    <property type="term" value="P:methylation"/>
    <property type="evidence" value="ECO:0007669"/>
    <property type="project" value="UniProtKB-KW"/>
</dbReference>
<dbReference type="GO" id="GO:0045905">
    <property type="term" value="P:positive regulation of translational termination"/>
    <property type="evidence" value="ECO:0000315"/>
    <property type="project" value="SGD"/>
</dbReference>
<dbReference type="CDD" id="cd02440">
    <property type="entry name" value="AdoMet_MTases"/>
    <property type="match status" value="1"/>
</dbReference>
<dbReference type="Gene3D" id="3.40.50.150">
    <property type="entry name" value="Vaccinia Virus protein VP39"/>
    <property type="match status" value="1"/>
</dbReference>
<dbReference type="InterPro" id="IPR019410">
    <property type="entry name" value="Methyltransf_16"/>
</dbReference>
<dbReference type="InterPro" id="IPR029063">
    <property type="entry name" value="SAM-dependent_MTases_sf"/>
</dbReference>
<dbReference type="PANTHER" id="PTHR14614">
    <property type="entry name" value="HEPATOCELLULAR CARCINOMA-ASSOCIATED ANTIGEN"/>
    <property type="match status" value="1"/>
</dbReference>
<dbReference type="PANTHER" id="PTHR14614:SF156">
    <property type="entry name" value="PROTEIN-LYSINE N-METHYLTRANSFERASE EFM2"/>
    <property type="match status" value="1"/>
</dbReference>
<dbReference type="Pfam" id="PF10294">
    <property type="entry name" value="Methyltransf_16"/>
    <property type="match status" value="1"/>
</dbReference>
<dbReference type="SUPFAM" id="SSF53335">
    <property type="entry name" value="S-adenosyl-L-methionine-dependent methyltransferases"/>
    <property type="match status" value="1"/>
</dbReference>
<reference key="1">
    <citation type="journal article" date="1994" name="EMBO J.">
        <title>Complete DNA sequence of yeast chromosome II.</title>
        <authorList>
            <person name="Feldmann H."/>
            <person name="Aigle M."/>
            <person name="Aljinovic G."/>
            <person name="Andre B."/>
            <person name="Baclet M.C."/>
            <person name="Barthe C."/>
            <person name="Baur A."/>
            <person name="Becam A.-M."/>
            <person name="Biteau N."/>
            <person name="Boles E."/>
            <person name="Brandt T."/>
            <person name="Brendel M."/>
            <person name="Brueckner M."/>
            <person name="Bussereau F."/>
            <person name="Christiansen C."/>
            <person name="Contreras R."/>
            <person name="Crouzet M."/>
            <person name="Cziepluch C."/>
            <person name="Demolis N."/>
            <person name="Delaveau T."/>
            <person name="Doignon F."/>
            <person name="Domdey H."/>
            <person name="Duesterhus S."/>
            <person name="Dubois E."/>
            <person name="Dujon B."/>
            <person name="El Bakkoury M."/>
            <person name="Entian K.-D."/>
            <person name="Feuermann M."/>
            <person name="Fiers W."/>
            <person name="Fobo G.M."/>
            <person name="Fritz C."/>
            <person name="Gassenhuber J."/>
            <person name="Glansdorff N."/>
            <person name="Goffeau A."/>
            <person name="Grivell L.A."/>
            <person name="de Haan M."/>
            <person name="Hein C."/>
            <person name="Herbert C.J."/>
            <person name="Hollenberg C.P."/>
            <person name="Holmstroem K."/>
            <person name="Jacq C."/>
            <person name="Jacquet M."/>
            <person name="Jauniaux J.-C."/>
            <person name="Jonniaux J.-L."/>
            <person name="Kallesoee T."/>
            <person name="Kiesau P."/>
            <person name="Kirchrath L."/>
            <person name="Koetter P."/>
            <person name="Korol S."/>
            <person name="Liebl S."/>
            <person name="Logghe M."/>
            <person name="Lohan A.J.E."/>
            <person name="Louis E.J."/>
            <person name="Li Z.Y."/>
            <person name="Maat M.J."/>
            <person name="Mallet L."/>
            <person name="Mannhaupt G."/>
            <person name="Messenguy F."/>
            <person name="Miosga T."/>
            <person name="Molemans F."/>
            <person name="Mueller S."/>
            <person name="Nasr F."/>
            <person name="Obermaier B."/>
            <person name="Perea J."/>
            <person name="Pierard A."/>
            <person name="Piravandi E."/>
            <person name="Pohl F.M."/>
            <person name="Pohl T.M."/>
            <person name="Potier S."/>
            <person name="Proft M."/>
            <person name="Purnelle B."/>
            <person name="Ramezani Rad M."/>
            <person name="Rieger M."/>
            <person name="Rose M."/>
            <person name="Schaaff-Gerstenschlaeger I."/>
            <person name="Scherens B."/>
            <person name="Schwarzlose C."/>
            <person name="Skala J."/>
            <person name="Slonimski P.P."/>
            <person name="Smits P.H.M."/>
            <person name="Souciet J.-L."/>
            <person name="Steensma H.Y."/>
            <person name="Stucka R."/>
            <person name="Urrestarazu L.A."/>
            <person name="van der Aart Q.J.M."/>
            <person name="Van Dyck L."/>
            <person name="Vassarotti A."/>
            <person name="Vetter I."/>
            <person name="Vierendeels F."/>
            <person name="Vissers S."/>
            <person name="Wagner G."/>
            <person name="de Wergifosse P."/>
            <person name="Wolfe K.H."/>
            <person name="Zagulski M."/>
            <person name="Zimmermann F.K."/>
            <person name="Mewes H.-W."/>
            <person name="Kleine K."/>
        </authorList>
    </citation>
    <scope>NUCLEOTIDE SEQUENCE [LARGE SCALE GENOMIC DNA]</scope>
    <source>
        <strain>ATCC 204508 / S288c</strain>
    </source>
</reference>
<reference key="2">
    <citation type="journal article" date="2014" name="G3 (Bethesda)">
        <title>The reference genome sequence of Saccharomyces cerevisiae: Then and now.</title>
        <authorList>
            <person name="Engel S.R."/>
            <person name="Dietrich F.S."/>
            <person name="Fisk D.G."/>
            <person name="Binkley G."/>
            <person name="Balakrishnan R."/>
            <person name="Costanzo M.C."/>
            <person name="Dwight S.S."/>
            <person name="Hitz B.C."/>
            <person name="Karra K."/>
            <person name="Nash R.S."/>
            <person name="Weng S."/>
            <person name="Wong E.D."/>
            <person name="Lloyd P."/>
            <person name="Skrzypek M.S."/>
            <person name="Miyasato S.R."/>
            <person name="Simison M."/>
            <person name="Cherry J.M."/>
        </authorList>
    </citation>
    <scope>GENOME REANNOTATION</scope>
    <source>
        <strain>ATCC 204508 / S288c</strain>
    </source>
</reference>
<reference key="3">
    <citation type="journal article" date="2007" name="Genome Res.">
        <title>Approaching a complete repository of sequence-verified protein-encoding clones for Saccharomyces cerevisiae.</title>
        <authorList>
            <person name="Hu Y."/>
            <person name="Rolfs A."/>
            <person name="Bhullar B."/>
            <person name="Murthy T.V.S."/>
            <person name="Zhu C."/>
            <person name="Berger M.F."/>
            <person name="Camargo A.A."/>
            <person name="Kelley F."/>
            <person name="McCarron S."/>
            <person name="Jepson D."/>
            <person name="Richardson A."/>
            <person name="Raphael J."/>
            <person name="Moreira D."/>
            <person name="Taycher E."/>
            <person name="Zuo D."/>
            <person name="Mohr S."/>
            <person name="Kane M.F."/>
            <person name="Williamson J."/>
            <person name="Simpson A.J.G."/>
            <person name="Bulyk M.L."/>
            <person name="Harlow E."/>
            <person name="Marsischky G."/>
            <person name="Kolodner R.D."/>
            <person name="LaBaer J."/>
        </authorList>
    </citation>
    <scope>NUCLEOTIDE SEQUENCE [GENOMIC DNA]</scope>
    <source>
        <strain>ATCC 204508 / S288c</strain>
    </source>
</reference>
<reference key="4">
    <citation type="journal article" date="2003" name="Nature">
        <title>Global analysis of protein localization in budding yeast.</title>
        <authorList>
            <person name="Huh W.-K."/>
            <person name="Falvo J.V."/>
            <person name="Gerke L.C."/>
            <person name="Carroll A.S."/>
            <person name="Howson R.W."/>
            <person name="Weissman J.S."/>
            <person name="O'Shea E.K."/>
        </authorList>
    </citation>
    <scope>SUBCELLULAR LOCATION [LARGE SCALE ANALYSIS]</scope>
</reference>
<reference key="5">
    <citation type="journal article" date="2003" name="Nature">
        <title>Global analysis of protein expression in yeast.</title>
        <authorList>
            <person name="Ghaemmaghami S."/>
            <person name="Huh W.-K."/>
            <person name="Bower K."/>
            <person name="Howson R.W."/>
            <person name="Belle A."/>
            <person name="Dephoure N."/>
            <person name="O'Shea E.K."/>
            <person name="Weissman J.S."/>
        </authorList>
    </citation>
    <scope>LEVEL OF PROTEIN EXPRESSION [LARGE SCALE ANALYSIS]</scope>
</reference>
<reference key="6">
    <citation type="journal article" date="2009" name="Science">
        <title>Global analysis of Cdk1 substrate phosphorylation sites provides insights into evolution.</title>
        <authorList>
            <person name="Holt L.J."/>
            <person name="Tuch B.B."/>
            <person name="Villen J."/>
            <person name="Johnson A.D."/>
            <person name="Gygi S.P."/>
            <person name="Morgan D.O."/>
        </authorList>
    </citation>
    <scope>IDENTIFICATION BY MASS SPECTROMETRY [LARGE SCALE ANALYSIS]</scope>
</reference>
<reference key="7">
    <citation type="journal article" date="2011" name="PLoS ONE">
        <title>Comprehensive structural and substrate specificity classification of the Saccharomyces cerevisiae methyltransferome.</title>
        <authorList>
            <person name="Wlodarski T."/>
            <person name="Kutner J."/>
            <person name="Towpik J."/>
            <person name="Knizewski L."/>
            <person name="Rychlewski L."/>
            <person name="Kudlicki A."/>
            <person name="Rowicka M."/>
            <person name="Dziembowski A."/>
            <person name="Ginalski K."/>
        </authorList>
    </citation>
    <scope>CATALYTIC ACTIVITY</scope>
    <scope>FUNCTION</scope>
</reference>
<reference key="8">
    <citation type="journal article" date="2012" name="Proteomics">
        <title>Methylation of translation-associated proteins in Saccharomyces cerevisiae: Identification of methylated lysines and their methyltransferases.</title>
        <authorList>
            <person name="Couttas T.A."/>
            <person name="Raftery M.J."/>
            <person name="Padula M.P."/>
            <person name="Herbert B.R."/>
            <person name="Wilkins M.R."/>
        </authorList>
    </citation>
    <scope>FUNCTION</scope>
</reference>
<reference key="9">
    <citation type="journal article" date="2014" name="J. Proteome Res.">
        <title>Stoichiometry of Saccharomyces cerevisiae lysine methylation: insights into non-histone protein lysine methyltransferase activity.</title>
        <authorList>
            <person name="Hart-Smith G."/>
            <person name="Chia S.Z."/>
            <person name="Low J.K."/>
            <person name="McKay M.J."/>
            <person name="Molloy M.P."/>
            <person name="Wilkins M.R."/>
        </authorList>
    </citation>
    <scope>FUNCTION</scope>
</reference>
<reference key="10">
    <citation type="journal article" date="2014" name="Biochem. Biophys. Res. Commun.">
        <title>Elongation factor methyltransferase 3 - A novel eukaryotic lysine methyltransferase.</title>
        <authorList>
            <person name="Zhang L."/>
            <person name="Hamey J.J."/>
            <person name="Hart-Smith G."/>
            <person name="Erce M.A."/>
            <person name="Wilkins M.R."/>
        </authorList>
    </citation>
    <scope>FUNCTION</scope>
    <scope>CATALYTIC ACTIVITY</scope>
</reference>
<reference key="11">
    <citation type="journal article" date="2014" name="J. Biol. Chem.">
        <title>Translational roles of elongation factor 2 protein lysine methylation.</title>
        <authorList>
            <person name="Dzialo M.C."/>
            <person name="Travaglini K.J."/>
            <person name="Shen S."/>
            <person name="Roy K."/>
            <person name="Chanfreau G.F."/>
            <person name="Loo J.A."/>
            <person name="Clarke S.G."/>
        </authorList>
    </citation>
    <scope>DISRUPTION PHENOTYPE</scope>
</reference>